<dbReference type="EMBL" id="CP000951">
    <property type="protein sequence ID" value="ACB00047.1"/>
    <property type="molecule type" value="Genomic_DNA"/>
</dbReference>
<dbReference type="SMR" id="B1XI62"/>
<dbReference type="STRING" id="32049.SYNPCC7002_A2060"/>
<dbReference type="KEGG" id="syp:SYNPCC7002_A2060"/>
<dbReference type="eggNOG" id="COG0051">
    <property type="taxonomic scope" value="Bacteria"/>
</dbReference>
<dbReference type="HOGENOM" id="CLU_122625_1_3_3"/>
<dbReference type="Proteomes" id="UP000001688">
    <property type="component" value="Chromosome"/>
</dbReference>
<dbReference type="GO" id="GO:1990904">
    <property type="term" value="C:ribonucleoprotein complex"/>
    <property type="evidence" value="ECO:0007669"/>
    <property type="project" value="UniProtKB-KW"/>
</dbReference>
<dbReference type="GO" id="GO:0005840">
    <property type="term" value="C:ribosome"/>
    <property type="evidence" value="ECO:0007669"/>
    <property type="project" value="UniProtKB-KW"/>
</dbReference>
<dbReference type="GO" id="GO:0003735">
    <property type="term" value="F:structural constituent of ribosome"/>
    <property type="evidence" value="ECO:0007669"/>
    <property type="project" value="InterPro"/>
</dbReference>
<dbReference type="GO" id="GO:0000049">
    <property type="term" value="F:tRNA binding"/>
    <property type="evidence" value="ECO:0007669"/>
    <property type="project" value="UniProtKB-UniRule"/>
</dbReference>
<dbReference type="GO" id="GO:0006412">
    <property type="term" value="P:translation"/>
    <property type="evidence" value="ECO:0007669"/>
    <property type="project" value="UniProtKB-UniRule"/>
</dbReference>
<dbReference type="FunFam" id="3.30.70.600:FF:000001">
    <property type="entry name" value="30S ribosomal protein S10"/>
    <property type="match status" value="1"/>
</dbReference>
<dbReference type="Gene3D" id="3.30.70.600">
    <property type="entry name" value="Ribosomal protein S10 domain"/>
    <property type="match status" value="1"/>
</dbReference>
<dbReference type="HAMAP" id="MF_00508">
    <property type="entry name" value="Ribosomal_uS10"/>
    <property type="match status" value="1"/>
</dbReference>
<dbReference type="InterPro" id="IPR001848">
    <property type="entry name" value="Ribosomal_uS10"/>
</dbReference>
<dbReference type="InterPro" id="IPR018268">
    <property type="entry name" value="Ribosomal_uS10_CS"/>
</dbReference>
<dbReference type="InterPro" id="IPR027486">
    <property type="entry name" value="Ribosomal_uS10_dom"/>
</dbReference>
<dbReference type="InterPro" id="IPR036838">
    <property type="entry name" value="Ribosomal_uS10_dom_sf"/>
</dbReference>
<dbReference type="NCBIfam" id="NF001861">
    <property type="entry name" value="PRK00596.1"/>
    <property type="match status" value="1"/>
</dbReference>
<dbReference type="NCBIfam" id="TIGR01049">
    <property type="entry name" value="rpsJ_bact"/>
    <property type="match status" value="1"/>
</dbReference>
<dbReference type="PANTHER" id="PTHR11700">
    <property type="entry name" value="30S RIBOSOMAL PROTEIN S10 FAMILY MEMBER"/>
    <property type="match status" value="1"/>
</dbReference>
<dbReference type="Pfam" id="PF00338">
    <property type="entry name" value="Ribosomal_S10"/>
    <property type="match status" value="1"/>
</dbReference>
<dbReference type="PRINTS" id="PR00971">
    <property type="entry name" value="RIBOSOMALS10"/>
</dbReference>
<dbReference type="SMART" id="SM01403">
    <property type="entry name" value="Ribosomal_S10"/>
    <property type="match status" value="1"/>
</dbReference>
<dbReference type="SUPFAM" id="SSF54999">
    <property type="entry name" value="Ribosomal protein S10"/>
    <property type="match status" value="1"/>
</dbReference>
<dbReference type="PROSITE" id="PS00361">
    <property type="entry name" value="RIBOSOMAL_S10"/>
    <property type="match status" value="1"/>
</dbReference>
<name>RS10_PICP2</name>
<gene>
    <name evidence="1" type="primary">rpsJ</name>
    <name evidence="1" type="synonym">rps10</name>
    <name type="ordered locus">SYNPCC7002_A2060</name>
</gene>
<protein>
    <recommendedName>
        <fullName evidence="1">Small ribosomal subunit protein uS10</fullName>
    </recommendedName>
    <alternativeName>
        <fullName evidence="2">30S ribosomal protein S10</fullName>
    </alternativeName>
</protein>
<evidence type="ECO:0000255" key="1">
    <source>
        <dbReference type="HAMAP-Rule" id="MF_00508"/>
    </source>
</evidence>
<evidence type="ECO:0000305" key="2"/>
<organism>
    <name type="scientific">Picosynechococcus sp. (strain ATCC 27264 / PCC 7002 / PR-6)</name>
    <name type="common">Agmenellum quadruplicatum</name>
    <dbReference type="NCBI Taxonomy" id="32049"/>
    <lineage>
        <taxon>Bacteria</taxon>
        <taxon>Bacillati</taxon>
        <taxon>Cyanobacteriota</taxon>
        <taxon>Cyanophyceae</taxon>
        <taxon>Oscillatoriophycideae</taxon>
        <taxon>Chroococcales</taxon>
        <taxon>Geminocystaceae</taxon>
        <taxon>Picosynechococcus</taxon>
    </lineage>
</organism>
<proteinExistence type="inferred from homology"/>
<sequence length="105" mass="12095">MATLQQQKIRIRLKAFDRRLLDTSCEKIVDTANRTNATAIGPIPLPTKRKIYCVLRSPHVDKDSREHFETRTHRRIIDIYQPSSKTIDALMKLDLPAGVDIEVKL</sequence>
<reference key="1">
    <citation type="submission" date="2008-02" db="EMBL/GenBank/DDBJ databases">
        <title>Complete sequence of Synechococcus sp. PCC 7002.</title>
        <authorList>
            <person name="Li T."/>
            <person name="Zhao J."/>
            <person name="Zhao C."/>
            <person name="Liu Z."/>
            <person name="Zhao F."/>
            <person name="Marquardt J."/>
            <person name="Nomura C.T."/>
            <person name="Persson S."/>
            <person name="Detter J.C."/>
            <person name="Richardson P.M."/>
            <person name="Lanz C."/>
            <person name="Schuster S.C."/>
            <person name="Wang J."/>
            <person name="Li S."/>
            <person name="Huang X."/>
            <person name="Cai T."/>
            <person name="Yu Z."/>
            <person name="Luo J."/>
            <person name="Zhao J."/>
            <person name="Bryant D.A."/>
        </authorList>
    </citation>
    <scope>NUCLEOTIDE SEQUENCE [LARGE SCALE GENOMIC DNA]</scope>
    <source>
        <strain>ATCC 27264 / PCC 7002 / PR-6</strain>
    </source>
</reference>
<comment type="function">
    <text evidence="1">Involved in the binding of tRNA to the ribosomes.</text>
</comment>
<comment type="subunit">
    <text evidence="1">Part of the 30S ribosomal subunit.</text>
</comment>
<comment type="similarity">
    <text evidence="1">Belongs to the universal ribosomal protein uS10 family.</text>
</comment>
<accession>B1XI62</accession>
<feature type="chain" id="PRO_1000127193" description="Small ribosomal subunit protein uS10">
    <location>
        <begin position="1"/>
        <end position="105"/>
    </location>
</feature>
<keyword id="KW-1185">Reference proteome</keyword>
<keyword id="KW-0687">Ribonucleoprotein</keyword>
<keyword id="KW-0689">Ribosomal protein</keyword>